<protein>
    <recommendedName>
        <fullName>Peroxisomal membrane protein 11 homolog</fullName>
    </recommendedName>
    <alternativeName>
        <fullName>Peroxin-11</fullName>
    </alternativeName>
</protein>
<reference key="1">
    <citation type="journal article" date="2005" name="Nature">
        <title>The genome of the social amoeba Dictyostelium discoideum.</title>
        <authorList>
            <person name="Eichinger L."/>
            <person name="Pachebat J.A."/>
            <person name="Gloeckner G."/>
            <person name="Rajandream M.A."/>
            <person name="Sucgang R."/>
            <person name="Berriman M."/>
            <person name="Song J."/>
            <person name="Olsen R."/>
            <person name="Szafranski K."/>
            <person name="Xu Q."/>
            <person name="Tunggal B."/>
            <person name="Kummerfeld S."/>
            <person name="Madera M."/>
            <person name="Konfortov B.A."/>
            <person name="Rivero F."/>
            <person name="Bankier A.T."/>
            <person name="Lehmann R."/>
            <person name="Hamlin N."/>
            <person name="Davies R."/>
            <person name="Gaudet P."/>
            <person name="Fey P."/>
            <person name="Pilcher K."/>
            <person name="Chen G."/>
            <person name="Saunders D."/>
            <person name="Sodergren E.J."/>
            <person name="Davis P."/>
            <person name="Kerhornou A."/>
            <person name="Nie X."/>
            <person name="Hall N."/>
            <person name="Anjard C."/>
            <person name="Hemphill L."/>
            <person name="Bason N."/>
            <person name="Farbrother P."/>
            <person name="Desany B."/>
            <person name="Just E."/>
            <person name="Morio T."/>
            <person name="Rost R."/>
            <person name="Churcher C.M."/>
            <person name="Cooper J."/>
            <person name="Haydock S."/>
            <person name="van Driessche N."/>
            <person name="Cronin A."/>
            <person name="Goodhead I."/>
            <person name="Muzny D.M."/>
            <person name="Mourier T."/>
            <person name="Pain A."/>
            <person name="Lu M."/>
            <person name="Harper D."/>
            <person name="Lindsay R."/>
            <person name="Hauser H."/>
            <person name="James K.D."/>
            <person name="Quiles M."/>
            <person name="Madan Babu M."/>
            <person name="Saito T."/>
            <person name="Buchrieser C."/>
            <person name="Wardroper A."/>
            <person name="Felder M."/>
            <person name="Thangavelu M."/>
            <person name="Johnson D."/>
            <person name="Knights A."/>
            <person name="Loulseged H."/>
            <person name="Mungall K.L."/>
            <person name="Oliver K."/>
            <person name="Price C."/>
            <person name="Quail M.A."/>
            <person name="Urushihara H."/>
            <person name="Hernandez J."/>
            <person name="Rabbinowitsch E."/>
            <person name="Steffen D."/>
            <person name="Sanders M."/>
            <person name="Ma J."/>
            <person name="Kohara Y."/>
            <person name="Sharp S."/>
            <person name="Simmonds M.N."/>
            <person name="Spiegler S."/>
            <person name="Tivey A."/>
            <person name="Sugano S."/>
            <person name="White B."/>
            <person name="Walker D."/>
            <person name="Woodward J.R."/>
            <person name="Winckler T."/>
            <person name="Tanaka Y."/>
            <person name="Shaulsky G."/>
            <person name="Schleicher M."/>
            <person name="Weinstock G.M."/>
            <person name="Rosenthal A."/>
            <person name="Cox E.C."/>
            <person name="Chisholm R.L."/>
            <person name="Gibbs R.A."/>
            <person name="Loomis W.F."/>
            <person name="Platzer M."/>
            <person name="Kay R.R."/>
            <person name="Williams J.G."/>
            <person name="Dear P.H."/>
            <person name="Noegel A.A."/>
            <person name="Barrell B.G."/>
            <person name="Kuspa A."/>
        </authorList>
    </citation>
    <scope>NUCLEOTIDE SEQUENCE [LARGE SCALE GENOMIC DNA]</scope>
    <source>
        <strain>AX4</strain>
    </source>
</reference>
<feature type="chain" id="PRO_0000328183" description="Peroxisomal membrane protein 11 homolog">
    <location>
        <begin position="1"/>
        <end position="254"/>
    </location>
</feature>
<feature type="topological domain" description="Cytoplasmic" evidence="2">
    <location>
        <begin position="1"/>
        <end position="91"/>
    </location>
</feature>
<feature type="transmembrane region" description="Helical" evidence="2">
    <location>
        <begin position="92"/>
        <end position="112"/>
    </location>
</feature>
<feature type="topological domain" description="Lumenal" evidence="2">
    <location>
        <begin position="113"/>
        <end position="227"/>
    </location>
</feature>
<feature type="transmembrane region" description="Helical" evidence="2">
    <location>
        <begin position="228"/>
        <end position="248"/>
    </location>
</feature>
<feature type="topological domain" description="Cytoplasmic" evidence="2">
    <location>
        <begin position="249"/>
        <end position="254"/>
    </location>
</feature>
<dbReference type="EMBL" id="AAFI02000147">
    <property type="protein sequence ID" value="EAL62629.1"/>
    <property type="molecule type" value="Genomic_DNA"/>
</dbReference>
<dbReference type="RefSeq" id="XP_636138.1">
    <property type="nucleotide sequence ID" value="XM_631046.1"/>
</dbReference>
<dbReference type="FunCoup" id="Q54H86">
    <property type="interactions" value="101"/>
</dbReference>
<dbReference type="STRING" id="44689.Q54H86"/>
<dbReference type="PaxDb" id="44689-DDB0238054"/>
<dbReference type="EnsemblProtists" id="EAL62629">
    <property type="protein sequence ID" value="EAL62629"/>
    <property type="gene ID" value="DDB_G0289623"/>
</dbReference>
<dbReference type="GeneID" id="8627241"/>
<dbReference type="KEGG" id="ddi:DDB_G0289623"/>
<dbReference type="dictyBase" id="DDB_G0289623">
    <property type="gene designation" value="pex11"/>
</dbReference>
<dbReference type="VEuPathDB" id="AmoebaDB:DDB_G0289623"/>
<dbReference type="eggNOG" id="KOG4186">
    <property type="taxonomic scope" value="Eukaryota"/>
</dbReference>
<dbReference type="HOGENOM" id="CLU_049216_2_1_1"/>
<dbReference type="InParanoid" id="Q54H86"/>
<dbReference type="OMA" id="CYWVLDN"/>
<dbReference type="PhylomeDB" id="Q54H86"/>
<dbReference type="Reactome" id="R-DDI-9603798">
    <property type="pathway name" value="Class I peroxisomal membrane protein import"/>
</dbReference>
<dbReference type="PRO" id="PR:Q54H86"/>
<dbReference type="Proteomes" id="UP000002195">
    <property type="component" value="Chromosome 5"/>
</dbReference>
<dbReference type="GO" id="GO:0005778">
    <property type="term" value="C:peroxisomal membrane"/>
    <property type="evidence" value="ECO:0000250"/>
    <property type="project" value="UniProtKB"/>
</dbReference>
<dbReference type="GO" id="GO:0016559">
    <property type="term" value="P:peroxisome fission"/>
    <property type="evidence" value="ECO:0000318"/>
    <property type="project" value="GO_Central"/>
</dbReference>
<dbReference type="GO" id="GO:0007031">
    <property type="term" value="P:peroxisome organization"/>
    <property type="evidence" value="ECO:0000250"/>
    <property type="project" value="UniProtKB"/>
</dbReference>
<dbReference type="GO" id="GO:0007165">
    <property type="term" value="P:signal transduction"/>
    <property type="evidence" value="ECO:0000250"/>
    <property type="project" value="UniProtKB"/>
</dbReference>
<dbReference type="InterPro" id="IPR008733">
    <property type="entry name" value="PEX11"/>
</dbReference>
<dbReference type="PANTHER" id="PTHR12652">
    <property type="entry name" value="PEROXISOMAL BIOGENESIS FACTOR 11"/>
    <property type="match status" value="1"/>
</dbReference>
<dbReference type="PANTHER" id="PTHR12652:SF42">
    <property type="entry name" value="PEROXISOMAL MEMBRANE PROTEIN 11 HOMOLOG"/>
    <property type="match status" value="1"/>
</dbReference>
<dbReference type="Pfam" id="PF05648">
    <property type="entry name" value="PEX11"/>
    <property type="match status" value="1"/>
</dbReference>
<gene>
    <name type="primary">pex11</name>
    <name type="ORF">DDB_G0289623</name>
</gene>
<accession>Q54H86</accession>
<proteinExistence type="inferred from homology"/>
<sequence>MAGILSKPNYNQFLESLIKLLAQTSGKDKIAKILQYGAKLLGYIFLKRSKHWVDVMKKLETTSGSARKVWRLGNTLAEQQKILALFKVKNPFAFLNILALIRQSGMYFYWVFDHLILGTNIGLCKFDTVKLGWYSSVSWFFGLLCSIIIDLNTLAIMLKKEKSLRLTITQNKINANNNNIDTHTITSEVENKAIIDQFNEVIKKKNEIYLNCAKNGSDLIIASTLLKIYPFSQGTIGISGIISALIGAYQMWPK</sequence>
<comment type="function">
    <text evidence="1">Involved in peroxisomal proliferation. Could participate in peroxisomal elongation or fission. May be involved in parceling of peroxisomes into regular quanta (By similarity).</text>
</comment>
<comment type="subcellular location">
    <subcellularLocation>
        <location evidence="1">Peroxisome membrane</location>
        <topology evidence="1">Multi-pass membrane protein</topology>
    </subcellularLocation>
</comment>
<comment type="similarity">
    <text evidence="3">Belongs to the peroxin-11 family.</text>
</comment>
<keyword id="KW-0472">Membrane</keyword>
<keyword id="KW-0576">Peroxisome</keyword>
<keyword id="KW-0962">Peroxisome biogenesis</keyword>
<keyword id="KW-1185">Reference proteome</keyword>
<keyword id="KW-0812">Transmembrane</keyword>
<keyword id="KW-1133">Transmembrane helix</keyword>
<name>PEX11_DICDI</name>
<organism>
    <name type="scientific">Dictyostelium discoideum</name>
    <name type="common">Social amoeba</name>
    <dbReference type="NCBI Taxonomy" id="44689"/>
    <lineage>
        <taxon>Eukaryota</taxon>
        <taxon>Amoebozoa</taxon>
        <taxon>Evosea</taxon>
        <taxon>Eumycetozoa</taxon>
        <taxon>Dictyostelia</taxon>
        <taxon>Dictyosteliales</taxon>
        <taxon>Dictyosteliaceae</taxon>
        <taxon>Dictyostelium</taxon>
    </lineage>
</organism>
<evidence type="ECO:0000250" key="1"/>
<evidence type="ECO:0000255" key="2"/>
<evidence type="ECO:0000305" key="3"/>